<keyword id="KW-0067">ATP-binding</keyword>
<keyword id="KW-0436">Ligase</keyword>
<keyword id="KW-0460">Magnesium</keyword>
<keyword id="KW-0464">Manganese</keyword>
<keyword id="KW-0479">Metal-binding</keyword>
<keyword id="KW-0547">Nucleotide-binding</keyword>
<keyword id="KW-0658">Purine biosynthesis</keyword>
<keyword id="KW-1185">Reference proteome</keyword>
<proteinExistence type="inferred from homology"/>
<reference key="1">
    <citation type="journal article" date="2004" name="J. Bacteriol.">
        <title>Complete genome sequence of the genetically tractable hydrogenotrophic methanogen Methanococcus maripaludis.</title>
        <authorList>
            <person name="Hendrickson E.L."/>
            <person name="Kaul R."/>
            <person name="Zhou Y."/>
            <person name="Bovee D."/>
            <person name="Chapman P."/>
            <person name="Chung J."/>
            <person name="Conway de Macario E."/>
            <person name="Dodsworth J.A."/>
            <person name="Gillett W."/>
            <person name="Graham D.E."/>
            <person name="Hackett M."/>
            <person name="Haydock A.K."/>
            <person name="Kang A."/>
            <person name="Land M.L."/>
            <person name="Levy R."/>
            <person name="Lie T.J."/>
            <person name="Major T.A."/>
            <person name="Moore B.C."/>
            <person name="Porat I."/>
            <person name="Palmeiri A."/>
            <person name="Rouse G."/>
            <person name="Saenphimmachak C."/>
            <person name="Soell D."/>
            <person name="Van Dien S."/>
            <person name="Wang T."/>
            <person name="Whitman W.B."/>
            <person name="Xia Q."/>
            <person name="Zhang Y."/>
            <person name="Larimer F.W."/>
            <person name="Olson M.V."/>
            <person name="Leigh J.A."/>
        </authorList>
    </citation>
    <scope>NUCLEOTIDE SEQUENCE [LARGE SCALE GENOMIC DNA]</scope>
    <source>
        <strain>DSM 14266 / JCM 13030 / NBRC 101832 / S2 / LL</strain>
    </source>
</reference>
<protein>
    <recommendedName>
        <fullName evidence="2">Phosphoribosylamine--glycine ligase</fullName>
        <ecNumber evidence="2">6.3.4.13</ecNumber>
    </recommendedName>
    <alternativeName>
        <fullName evidence="2">GARS</fullName>
    </alternativeName>
    <alternativeName>
        <fullName evidence="2">Glycinamide ribonucleotide synthetase</fullName>
    </alternativeName>
    <alternativeName>
        <fullName evidence="2">Phosphoribosylglycinamide synthetase</fullName>
    </alternativeName>
</protein>
<comment type="catalytic activity">
    <reaction evidence="2">
        <text>5-phospho-beta-D-ribosylamine + glycine + ATP = N(1)-(5-phospho-beta-D-ribosyl)glycinamide + ADP + phosphate + H(+)</text>
        <dbReference type="Rhea" id="RHEA:17453"/>
        <dbReference type="ChEBI" id="CHEBI:15378"/>
        <dbReference type="ChEBI" id="CHEBI:30616"/>
        <dbReference type="ChEBI" id="CHEBI:43474"/>
        <dbReference type="ChEBI" id="CHEBI:57305"/>
        <dbReference type="ChEBI" id="CHEBI:58681"/>
        <dbReference type="ChEBI" id="CHEBI:143788"/>
        <dbReference type="ChEBI" id="CHEBI:456216"/>
        <dbReference type="EC" id="6.3.4.13"/>
    </reaction>
</comment>
<comment type="cofactor">
    <cofactor evidence="1">
        <name>Mg(2+)</name>
        <dbReference type="ChEBI" id="CHEBI:18420"/>
    </cofactor>
    <cofactor evidence="1">
        <name>Mn(2+)</name>
        <dbReference type="ChEBI" id="CHEBI:29035"/>
    </cofactor>
    <text evidence="1">Binds 2 magnesium or manganese ions per subunit.</text>
</comment>
<comment type="pathway">
    <text evidence="2">Purine metabolism; IMP biosynthesis via de novo pathway; N(1)-(5-phospho-D-ribosyl)glycinamide from 5-phospho-alpha-D-ribose 1-diphosphate: step 2/2.</text>
</comment>
<comment type="similarity">
    <text evidence="2">Belongs to the GARS family.</text>
</comment>
<accession>Q6M079</accession>
<gene>
    <name evidence="2" type="primary">purD</name>
    <name type="ordered locus">MMP0392</name>
</gene>
<organism>
    <name type="scientific">Methanococcus maripaludis (strain DSM 14266 / JCM 13030 / NBRC 101832 / S2 / LL)</name>
    <dbReference type="NCBI Taxonomy" id="267377"/>
    <lineage>
        <taxon>Archaea</taxon>
        <taxon>Methanobacteriati</taxon>
        <taxon>Methanobacteriota</taxon>
        <taxon>Methanomada group</taxon>
        <taxon>Methanococci</taxon>
        <taxon>Methanococcales</taxon>
        <taxon>Methanococcaceae</taxon>
        <taxon>Methanococcus</taxon>
    </lineage>
</organism>
<dbReference type="EC" id="6.3.4.13" evidence="2"/>
<dbReference type="EMBL" id="BX950229">
    <property type="protein sequence ID" value="CAF29948.1"/>
    <property type="molecule type" value="Genomic_DNA"/>
</dbReference>
<dbReference type="RefSeq" id="WP_011170336.1">
    <property type="nucleotide sequence ID" value="NC_005791.1"/>
</dbReference>
<dbReference type="SMR" id="Q6M079"/>
<dbReference type="STRING" id="267377.MMP0392"/>
<dbReference type="EnsemblBacteria" id="CAF29948">
    <property type="protein sequence ID" value="CAF29948"/>
    <property type="gene ID" value="MMP0392"/>
</dbReference>
<dbReference type="GeneID" id="2762213"/>
<dbReference type="KEGG" id="mmp:MMP0392"/>
<dbReference type="PATRIC" id="fig|267377.15.peg.396"/>
<dbReference type="eggNOG" id="arCOG04415">
    <property type="taxonomic scope" value="Archaea"/>
</dbReference>
<dbReference type="HOGENOM" id="CLU_027420_3_0_2"/>
<dbReference type="OrthoDB" id="146558at2157"/>
<dbReference type="UniPathway" id="UPA00074">
    <property type="reaction ID" value="UER00125"/>
</dbReference>
<dbReference type="Proteomes" id="UP000000590">
    <property type="component" value="Chromosome"/>
</dbReference>
<dbReference type="GO" id="GO:0005524">
    <property type="term" value="F:ATP binding"/>
    <property type="evidence" value="ECO:0007669"/>
    <property type="project" value="UniProtKB-KW"/>
</dbReference>
<dbReference type="GO" id="GO:0046872">
    <property type="term" value="F:metal ion binding"/>
    <property type="evidence" value="ECO:0007669"/>
    <property type="project" value="UniProtKB-KW"/>
</dbReference>
<dbReference type="GO" id="GO:0004637">
    <property type="term" value="F:phosphoribosylamine-glycine ligase activity"/>
    <property type="evidence" value="ECO:0007669"/>
    <property type="project" value="UniProtKB-UniRule"/>
</dbReference>
<dbReference type="GO" id="GO:0006189">
    <property type="term" value="P:'de novo' IMP biosynthetic process"/>
    <property type="evidence" value="ECO:0007669"/>
    <property type="project" value="UniProtKB-UniRule"/>
</dbReference>
<dbReference type="GO" id="GO:0009113">
    <property type="term" value="P:purine nucleobase biosynthetic process"/>
    <property type="evidence" value="ECO:0007669"/>
    <property type="project" value="InterPro"/>
</dbReference>
<dbReference type="Gene3D" id="3.40.50.20">
    <property type="match status" value="1"/>
</dbReference>
<dbReference type="Gene3D" id="3.30.1490.20">
    <property type="entry name" value="ATP-grasp fold, A domain"/>
    <property type="match status" value="1"/>
</dbReference>
<dbReference type="Gene3D" id="3.30.470.20">
    <property type="entry name" value="ATP-grasp fold, B domain"/>
    <property type="match status" value="1"/>
</dbReference>
<dbReference type="Gene3D" id="3.90.600.10">
    <property type="entry name" value="Phosphoribosylglycinamide synthetase, C-terminal domain"/>
    <property type="match status" value="1"/>
</dbReference>
<dbReference type="HAMAP" id="MF_00138">
    <property type="entry name" value="GARS"/>
    <property type="match status" value="1"/>
</dbReference>
<dbReference type="InterPro" id="IPR011761">
    <property type="entry name" value="ATP-grasp"/>
</dbReference>
<dbReference type="InterPro" id="IPR013815">
    <property type="entry name" value="ATP_grasp_subdomain_1"/>
</dbReference>
<dbReference type="InterPro" id="IPR016185">
    <property type="entry name" value="PreATP-grasp_dom_sf"/>
</dbReference>
<dbReference type="InterPro" id="IPR020561">
    <property type="entry name" value="PRibGlycinamid_synth_ATP-grasp"/>
</dbReference>
<dbReference type="InterPro" id="IPR000115">
    <property type="entry name" value="PRibGlycinamide_synth"/>
</dbReference>
<dbReference type="InterPro" id="IPR020560">
    <property type="entry name" value="PRibGlycinamide_synth_C-dom"/>
</dbReference>
<dbReference type="InterPro" id="IPR037123">
    <property type="entry name" value="PRibGlycinamide_synth_C_sf"/>
</dbReference>
<dbReference type="InterPro" id="IPR020559">
    <property type="entry name" value="PRibGlycinamide_synth_CS"/>
</dbReference>
<dbReference type="InterPro" id="IPR020562">
    <property type="entry name" value="PRibGlycinamide_synth_N"/>
</dbReference>
<dbReference type="InterPro" id="IPR011054">
    <property type="entry name" value="Rudment_hybrid_motif"/>
</dbReference>
<dbReference type="NCBIfam" id="TIGR00877">
    <property type="entry name" value="purD"/>
    <property type="match status" value="1"/>
</dbReference>
<dbReference type="PANTHER" id="PTHR43472">
    <property type="entry name" value="PHOSPHORIBOSYLAMINE--GLYCINE LIGASE"/>
    <property type="match status" value="1"/>
</dbReference>
<dbReference type="PANTHER" id="PTHR43472:SF1">
    <property type="entry name" value="PHOSPHORIBOSYLAMINE--GLYCINE LIGASE, CHLOROPLASTIC"/>
    <property type="match status" value="1"/>
</dbReference>
<dbReference type="Pfam" id="PF01071">
    <property type="entry name" value="GARS_A"/>
    <property type="match status" value="1"/>
</dbReference>
<dbReference type="Pfam" id="PF02843">
    <property type="entry name" value="GARS_C"/>
    <property type="match status" value="1"/>
</dbReference>
<dbReference type="Pfam" id="PF02844">
    <property type="entry name" value="GARS_N"/>
    <property type="match status" value="1"/>
</dbReference>
<dbReference type="SMART" id="SM01209">
    <property type="entry name" value="GARS_A"/>
    <property type="match status" value="1"/>
</dbReference>
<dbReference type="SMART" id="SM01210">
    <property type="entry name" value="GARS_C"/>
    <property type="match status" value="1"/>
</dbReference>
<dbReference type="SUPFAM" id="SSF56059">
    <property type="entry name" value="Glutathione synthetase ATP-binding domain-like"/>
    <property type="match status" value="1"/>
</dbReference>
<dbReference type="SUPFAM" id="SSF52440">
    <property type="entry name" value="PreATP-grasp domain"/>
    <property type="match status" value="1"/>
</dbReference>
<dbReference type="SUPFAM" id="SSF51246">
    <property type="entry name" value="Rudiment single hybrid motif"/>
    <property type="match status" value="1"/>
</dbReference>
<dbReference type="PROSITE" id="PS50975">
    <property type="entry name" value="ATP_GRASP"/>
    <property type="match status" value="1"/>
</dbReference>
<dbReference type="PROSITE" id="PS00184">
    <property type="entry name" value="GARS"/>
    <property type="match status" value="1"/>
</dbReference>
<sequence>MKVLLIGGGAREHAIAMALKKNELVELYTLMKNKNPGIYALSEEVSFNSETDVPAIKEFAEKIKPEIAVIGPESPLGVGASDLLEEMGIPTVGPKKLPAQIETSKEFMRNLFKKYEIDGSLKYAAFNDYGTELEGFIDEMTSLGKDVVVKPAGLTGGKGVKVVGEQLKDNEEAKIYAKEVFDKSIGGGKIIIEEKLVGVEFTLHGFVDGENIVFMPAVQDHPHAYNNDEGPITGGMGSYSCPNHGLPFLSEEMLDKAEKIMEKTVNSINLEVGPYKGFLYGQFMLTADGPKIIEYNARFGDPEAMNLLPILKTDFLDVCFAIAEGKLDKINIEFENKATVCKYVVPNGYPIDPVRNKELAVDEKAIEDANAILFYASINEENGKLYITGSRSAAVVGISENIEEAEKIAQKAIENFKGEVYYRSDIGTLDLIKKRVERVKKLAK</sequence>
<feature type="chain" id="PRO_1000018827" description="Phosphoribosylamine--glycine ligase">
    <location>
        <begin position="1"/>
        <end position="444"/>
    </location>
</feature>
<feature type="domain" description="ATP-grasp" evidence="2">
    <location>
        <begin position="109"/>
        <end position="324"/>
    </location>
</feature>
<feature type="binding site" evidence="2">
    <location>
        <begin position="140"/>
        <end position="202"/>
    </location>
    <ligand>
        <name>ATP</name>
        <dbReference type="ChEBI" id="CHEBI:30616"/>
    </ligand>
</feature>
<feature type="binding site" evidence="2">
    <location>
        <position position="282"/>
    </location>
    <ligand>
        <name>Mg(2+)</name>
        <dbReference type="ChEBI" id="CHEBI:18420"/>
        <label>1</label>
    </ligand>
</feature>
<feature type="binding site" evidence="2">
    <location>
        <position position="282"/>
    </location>
    <ligand>
        <name>Mn(2+)</name>
        <dbReference type="ChEBI" id="CHEBI:29035"/>
        <label>1</label>
    </ligand>
</feature>
<feature type="binding site" evidence="2">
    <location>
        <position position="294"/>
    </location>
    <ligand>
        <name>Mg(2+)</name>
        <dbReference type="ChEBI" id="CHEBI:18420"/>
        <label>1</label>
    </ligand>
</feature>
<feature type="binding site" evidence="2">
    <location>
        <position position="294"/>
    </location>
    <ligand>
        <name>Mg(2+)</name>
        <dbReference type="ChEBI" id="CHEBI:18420"/>
        <label>2</label>
    </ligand>
</feature>
<feature type="binding site" evidence="2">
    <location>
        <position position="294"/>
    </location>
    <ligand>
        <name>Mn(2+)</name>
        <dbReference type="ChEBI" id="CHEBI:29035"/>
        <label>1</label>
    </ligand>
</feature>
<feature type="binding site" evidence="2">
    <location>
        <position position="294"/>
    </location>
    <ligand>
        <name>Mn(2+)</name>
        <dbReference type="ChEBI" id="CHEBI:29035"/>
        <label>2</label>
    </ligand>
</feature>
<feature type="binding site" evidence="2">
    <location>
        <position position="296"/>
    </location>
    <ligand>
        <name>Mg(2+)</name>
        <dbReference type="ChEBI" id="CHEBI:18420"/>
        <label>2</label>
    </ligand>
</feature>
<feature type="binding site" evidence="2">
    <location>
        <position position="296"/>
    </location>
    <ligand>
        <name>Mn(2+)</name>
        <dbReference type="ChEBI" id="CHEBI:29035"/>
        <label>2</label>
    </ligand>
</feature>
<evidence type="ECO:0000250" key="1"/>
<evidence type="ECO:0000255" key="2">
    <source>
        <dbReference type="HAMAP-Rule" id="MF_00138"/>
    </source>
</evidence>
<name>PUR2_METMP</name>